<accession>Q49VQ7</accession>
<dbReference type="EC" id="6.3.4.20" evidence="1"/>
<dbReference type="EMBL" id="AP008934">
    <property type="protein sequence ID" value="BAE19153.1"/>
    <property type="molecule type" value="Genomic_DNA"/>
</dbReference>
<dbReference type="RefSeq" id="WP_002483950.1">
    <property type="nucleotide sequence ID" value="NZ_MTGA01000039.1"/>
</dbReference>
<dbReference type="SMR" id="Q49VQ7"/>
<dbReference type="GeneID" id="3616722"/>
<dbReference type="KEGG" id="ssp:SSP2008"/>
<dbReference type="eggNOG" id="COG0603">
    <property type="taxonomic scope" value="Bacteria"/>
</dbReference>
<dbReference type="HOGENOM" id="CLU_081854_0_0_9"/>
<dbReference type="OrthoDB" id="9789567at2"/>
<dbReference type="UniPathway" id="UPA00391"/>
<dbReference type="Proteomes" id="UP000006371">
    <property type="component" value="Chromosome"/>
</dbReference>
<dbReference type="GO" id="GO:0005524">
    <property type="term" value="F:ATP binding"/>
    <property type="evidence" value="ECO:0007669"/>
    <property type="project" value="UniProtKB-UniRule"/>
</dbReference>
<dbReference type="GO" id="GO:0016879">
    <property type="term" value="F:ligase activity, forming carbon-nitrogen bonds"/>
    <property type="evidence" value="ECO:0007669"/>
    <property type="project" value="UniProtKB-UniRule"/>
</dbReference>
<dbReference type="GO" id="GO:0008270">
    <property type="term" value="F:zinc ion binding"/>
    <property type="evidence" value="ECO:0007669"/>
    <property type="project" value="UniProtKB-UniRule"/>
</dbReference>
<dbReference type="GO" id="GO:0008616">
    <property type="term" value="P:queuosine biosynthetic process"/>
    <property type="evidence" value="ECO:0007669"/>
    <property type="project" value="UniProtKB-UniRule"/>
</dbReference>
<dbReference type="CDD" id="cd01995">
    <property type="entry name" value="QueC-like"/>
    <property type="match status" value="1"/>
</dbReference>
<dbReference type="FunFam" id="3.40.50.620:FF:000017">
    <property type="entry name" value="7-cyano-7-deazaguanine synthase"/>
    <property type="match status" value="1"/>
</dbReference>
<dbReference type="Gene3D" id="3.40.50.620">
    <property type="entry name" value="HUPs"/>
    <property type="match status" value="1"/>
</dbReference>
<dbReference type="HAMAP" id="MF_01633">
    <property type="entry name" value="QueC"/>
    <property type="match status" value="1"/>
</dbReference>
<dbReference type="InterPro" id="IPR018317">
    <property type="entry name" value="QueC"/>
</dbReference>
<dbReference type="InterPro" id="IPR014729">
    <property type="entry name" value="Rossmann-like_a/b/a_fold"/>
</dbReference>
<dbReference type="NCBIfam" id="TIGR00364">
    <property type="entry name" value="7-cyano-7-deazaguanine synthase QueC"/>
    <property type="match status" value="1"/>
</dbReference>
<dbReference type="PANTHER" id="PTHR42914">
    <property type="entry name" value="7-CYANO-7-DEAZAGUANINE SYNTHASE"/>
    <property type="match status" value="1"/>
</dbReference>
<dbReference type="PANTHER" id="PTHR42914:SF1">
    <property type="entry name" value="7-CYANO-7-DEAZAGUANINE SYNTHASE"/>
    <property type="match status" value="1"/>
</dbReference>
<dbReference type="Pfam" id="PF06508">
    <property type="entry name" value="QueC"/>
    <property type="match status" value="1"/>
</dbReference>
<dbReference type="PIRSF" id="PIRSF006293">
    <property type="entry name" value="ExsB"/>
    <property type="match status" value="1"/>
</dbReference>
<dbReference type="SUPFAM" id="SSF52402">
    <property type="entry name" value="Adenine nucleotide alpha hydrolases-like"/>
    <property type="match status" value="1"/>
</dbReference>
<sequence length="223" mass="24622">MSEQTLDNNKAIVVFSGGQDSTTCLFWAKKHFESVELVTFAYGQRHDTEIEVAKQIADEQGVKHHLLDMSLLSQLTPNALTQHDLDIEVGDDGIPNTFVPARNLLFLSFAGALAYQTNAKHIITGVCETDFSGYPDCRDSFVKSMNVTLSLSMDKDFVIHTPLMWLDKKATWALSDDLGVLDYIRYNTLTCYNGVIGDGCGECPACQLRANGLNAYLAEKGVD</sequence>
<name>QUEC_STAS1</name>
<comment type="function">
    <text evidence="1">Catalyzes the ATP-dependent conversion of 7-carboxy-7-deazaguanine (CDG) to 7-cyano-7-deazaguanine (preQ(0)).</text>
</comment>
<comment type="catalytic activity">
    <reaction evidence="1">
        <text>7-carboxy-7-deazaguanine + NH4(+) + ATP = 7-cyano-7-deazaguanine + ADP + phosphate + H2O + H(+)</text>
        <dbReference type="Rhea" id="RHEA:27982"/>
        <dbReference type="ChEBI" id="CHEBI:15377"/>
        <dbReference type="ChEBI" id="CHEBI:15378"/>
        <dbReference type="ChEBI" id="CHEBI:28938"/>
        <dbReference type="ChEBI" id="CHEBI:30616"/>
        <dbReference type="ChEBI" id="CHEBI:43474"/>
        <dbReference type="ChEBI" id="CHEBI:45075"/>
        <dbReference type="ChEBI" id="CHEBI:61036"/>
        <dbReference type="ChEBI" id="CHEBI:456216"/>
        <dbReference type="EC" id="6.3.4.20"/>
    </reaction>
</comment>
<comment type="cofactor">
    <cofactor evidence="1">
        <name>Zn(2+)</name>
        <dbReference type="ChEBI" id="CHEBI:29105"/>
    </cofactor>
    <text evidence="1">Binds 1 zinc ion per subunit.</text>
</comment>
<comment type="pathway">
    <text evidence="1">Purine metabolism; 7-cyano-7-deazaguanine biosynthesis.</text>
</comment>
<comment type="subunit">
    <text evidence="1">Homodimer.</text>
</comment>
<comment type="similarity">
    <text evidence="1">Belongs to the QueC family.</text>
</comment>
<proteinExistence type="inferred from homology"/>
<gene>
    <name evidence="1" type="primary">queC</name>
    <name type="ordered locus">SSP2008</name>
</gene>
<feature type="chain" id="PRO_0000246940" description="7-cyano-7-deazaguanine synthase">
    <location>
        <begin position="1"/>
        <end position="223"/>
    </location>
</feature>
<feature type="binding site" evidence="1">
    <location>
        <begin position="15"/>
        <end position="25"/>
    </location>
    <ligand>
        <name>ATP</name>
        <dbReference type="ChEBI" id="CHEBI:30616"/>
    </ligand>
</feature>
<feature type="binding site" evidence="1">
    <location>
        <position position="191"/>
    </location>
    <ligand>
        <name>Zn(2+)</name>
        <dbReference type="ChEBI" id="CHEBI:29105"/>
    </ligand>
</feature>
<feature type="binding site" evidence="1">
    <location>
        <position position="200"/>
    </location>
    <ligand>
        <name>Zn(2+)</name>
        <dbReference type="ChEBI" id="CHEBI:29105"/>
    </ligand>
</feature>
<feature type="binding site" evidence="1">
    <location>
        <position position="203"/>
    </location>
    <ligand>
        <name>Zn(2+)</name>
        <dbReference type="ChEBI" id="CHEBI:29105"/>
    </ligand>
</feature>
<feature type="binding site" evidence="1">
    <location>
        <position position="206"/>
    </location>
    <ligand>
        <name>Zn(2+)</name>
        <dbReference type="ChEBI" id="CHEBI:29105"/>
    </ligand>
</feature>
<protein>
    <recommendedName>
        <fullName evidence="1">7-cyano-7-deazaguanine synthase</fullName>
        <ecNumber evidence="1">6.3.4.20</ecNumber>
    </recommendedName>
    <alternativeName>
        <fullName evidence="1">7-cyano-7-carbaguanine synthase</fullName>
    </alternativeName>
    <alternativeName>
        <fullName evidence="1">PreQ(0) synthase</fullName>
    </alternativeName>
    <alternativeName>
        <fullName evidence="1">Queuosine biosynthesis protein QueC</fullName>
    </alternativeName>
</protein>
<reference key="1">
    <citation type="journal article" date="2005" name="Proc. Natl. Acad. Sci. U.S.A.">
        <title>Whole genome sequence of Staphylococcus saprophyticus reveals the pathogenesis of uncomplicated urinary tract infection.</title>
        <authorList>
            <person name="Kuroda M."/>
            <person name="Yamashita A."/>
            <person name="Hirakawa H."/>
            <person name="Kumano M."/>
            <person name="Morikawa K."/>
            <person name="Higashide M."/>
            <person name="Maruyama A."/>
            <person name="Inose Y."/>
            <person name="Matoba K."/>
            <person name="Toh H."/>
            <person name="Kuhara S."/>
            <person name="Hattori M."/>
            <person name="Ohta T."/>
        </authorList>
    </citation>
    <scope>NUCLEOTIDE SEQUENCE [LARGE SCALE GENOMIC DNA]</scope>
    <source>
        <strain>ATCC 15305 / DSM 20229 / NCIMB 8711 / NCTC 7292 / S-41</strain>
    </source>
</reference>
<keyword id="KW-0067">ATP-binding</keyword>
<keyword id="KW-0436">Ligase</keyword>
<keyword id="KW-0479">Metal-binding</keyword>
<keyword id="KW-0547">Nucleotide-binding</keyword>
<keyword id="KW-0671">Queuosine biosynthesis</keyword>
<keyword id="KW-1185">Reference proteome</keyword>
<keyword id="KW-0862">Zinc</keyword>
<evidence type="ECO:0000255" key="1">
    <source>
        <dbReference type="HAMAP-Rule" id="MF_01633"/>
    </source>
</evidence>
<organism>
    <name type="scientific">Staphylococcus saprophyticus subsp. saprophyticus (strain ATCC 15305 / DSM 20229 / NCIMB 8711 / NCTC 7292 / S-41)</name>
    <dbReference type="NCBI Taxonomy" id="342451"/>
    <lineage>
        <taxon>Bacteria</taxon>
        <taxon>Bacillati</taxon>
        <taxon>Bacillota</taxon>
        <taxon>Bacilli</taxon>
        <taxon>Bacillales</taxon>
        <taxon>Staphylococcaceae</taxon>
        <taxon>Staphylococcus</taxon>
    </lineage>
</organism>